<feature type="chain" id="PRO_1000122482" description="Glutamyl-tRNA(Gln) amidotransferase subunit A">
    <location>
        <begin position="1"/>
        <end position="481"/>
    </location>
</feature>
<feature type="active site" description="Charge relay system" evidence="1">
    <location>
        <position position="75"/>
    </location>
</feature>
<feature type="active site" description="Charge relay system" evidence="1">
    <location>
        <position position="150"/>
    </location>
</feature>
<feature type="active site" description="Acyl-ester intermediate" evidence="1">
    <location>
        <position position="174"/>
    </location>
</feature>
<name>GATA_MACCJ</name>
<organism>
    <name type="scientific">Macrococcus caseolyticus (strain JCSC5402)</name>
    <name type="common">Macrococcoides caseolyticum</name>
    <dbReference type="NCBI Taxonomy" id="458233"/>
    <lineage>
        <taxon>Bacteria</taxon>
        <taxon>Bacillati</taxon>
        <taxon>Bacillota</taxon>
        <taxon>Bacilli</taxon>
        <taxon>Bacillales</taxon>
        <taxon>Staphylococcaceae</taxon>
        <taxon>Macrococcoides</taxon>
    </lineage>
</organism>
<accession>B9E826</accession>
<proteinExistence type="inferred from homology"/>
<gene>
    <name evidence="1" type="primary">gatA</name>
    <name type="ordered locus">MCCL_1637</name>
</gene>
<evidence type="ECO:0000255" key="1">
    <source>
        <dbReference type="HAMAP-Rule" id="MF_00120"/>
    </source>
</evidence>
<protein>
    <recommendedName>
        <fullName evidence="1">Glutamyl-tRNA(Gln) amidotransferase subunit A</fullName>
        <shortName evidence="1">Glu-ADT subunit A</shortName>
        <ecNumber evidence="1">6.3.5.7</ecNumber>
    </recommendedName>
</protein>
<sequence>MSLRYESIESLSQMIQNKTIRPSELIEDTFVNIEKDDTVINSFLALDKEAALEKAKTMDNETPSGKLFGIPMGIKDNIVTKDVETTCASKILEGFNSVYDATVMNKLNAENGILVGKLNMDEFAMGGSTENSFYKKTVNPFDHKAVPGGSSGGSAAAVAASLVPFSLGSDTGGSIRQPASYCGVVGMKPTYGRVSRFGLVAFASSLDQIGPITRNVKDNATVLEVISGLDPHDSTSAPVDNVDFTSQIDKDIKGLRVAVPKEYLGEGVSEEVKASVQAAIKALEKMGATVEEVSLPNSKYGVATYYILSSSEASANLARFDGIRYGYQAEGAQNLEELYKKTRQEGFGDEVKRRIMLGTYALSSGYYDAYYKKAQKVRTLIKQDFERVFENYDIIVGPTAPTTAFDIGAQINDPLTMYANDILTIPINLAGLPSMSIPCGESNGRPIGLQLIGKPFDEKTLYNVAYNYEQIFNMHERYQSL</sequence>
<comment type="function">
    <text evidence="1">Allows the formation of correctly charged Gln-tRNA(Gln) through the transamidation of misacylated Glu-tRNA(Gln) in organisms which lack glutaminyl-tRNA synthetase. The reaction takes place in the presence of glutamine and ATP through an activated gamma-phospho-Glu-tRNA(Gln).</text>
</comment>
<comment type="catalytic activity">
    <reaction evidence="1">
        <text>L-glutamyl-tRNA(Gln) + L-glutamine + ATP + H2O = L-glutaminyl-tRNA(Gln) + L-glutamate + ADP + phosphate + H(+)</text>
        <dbReference type="Rhea" id="RHEA:17521"/>
        <dbReference type="Rhea" id="RHEA-COMP:9681"/>
        <dbReference type="Rhea" id="RHEA-COMP:9684"/>
        <dbReference type="ChEBI" id="CHEBI:15377"/>
        <dbReference type="ChEBI" id="CHEBI:15378"/>
        <dbReference type="ChEBI" id="CHEBI:29985"/>
        <dbReference type="ChEBI" id="CHEBI:30616"/>
        <dbReference type="ChEBI" id="CHEBI:43474"/>
        <dbReference type="ChEBI" id="CHEBI:58359"/>
        <dbReference type="ChEBI" id="CHEBI:78520"/>
        <dbReference type="ChEBI" id="CHEBI:78521"/>
        <dbReference type="ChEBI" id="CHEBI:456216"/>
        <dbReference type="EC" id="6.3.5.7"/>
    </reaction>
</comment>
<comment type="subunit">
    <text evidence="1">Heterotrimer of A, B and C subunits.</text>
</comment>
<comment type="similarity">
    <text evidence="1">Belongs to the amidase family. GatA subfamily.</text>
</comment>
<reference key="1">
    <citation type="journal article" date="2009" name="J. Bacteriol.">
        <title>Complete genome sequence of Macrococcus caseolyticus strain JCSCS5402, reflecting the ancestral genome of the human-pathogenic staphylococci.</title>
        <authorList>
            <person name="Baba T."/>
            <person name="Kuwahara-Arai K."/>
            <person name="Uchiyama I."/>
            <person name="Takeuchi F."/>
            <person name="Ito T."/>
            <person name="Hiramatsu K."/>
        </authorList>
    </citation>
    <scope>NUCLEOTIDE SEQUENCE [LARGE SCALE GENOMIC DNA]</scope>
    <source>
        <strain>JCSC5402</strain>
    </source>
</reference>
<keyword id="KW-0067">ATP-binding</keyword>
<keyword id="KW-0436">Ligase</keyword>
<keyword id="KW-0547">Nucleotide-binding</keyword>
<keyword id="KW-0648">Protein biosynthesis</keyword>
<keyword id="KW-1185">Reference proteome</keyword>
<dbReference type="EC" id="6.3.5.7" evidence="1"/>
<dbReference type="EMBL" id="AP009484">
    <property type="protein sequence ID" value="BAH18344.1"/>
    <property type="molecule type" value="Genomic_DNA"/>
</dbReference>
<dbReference type="RefSeq" id="WP_012657538.1">
    <property type="nucleotide sequence ID" value="NC_011999.1"/>
</dbReference>
<dbReference type="SMR" id="B9E826"/>
<dbReference type="STRING" id="458233.MCCL_1637"/>
<dbReference type="KEGG" id="mcl:MCCL_1637"/>
<dbReference type="eggNOG" id="COG0154">
    <property type="taxonomic scope" value="Bacteria"/>
</dbReference>
<dbReference type="HOGENOM" id="CLU_009600_0_3_9"/>
<dbReference type="OrthoDB" id="9811471at2"/>
<dbReference type="Proteomes" id="UP000001383">
    <property type="component" value="Chromosome"/>
</dbReference>
<dbReference type="GO" id="GO:0030956">
    <property type="term" value="C:glutamyl-tRNA(Gln) amidotransferase complex"/>
    <property type="evidence" value="ECO:0007669"/>
    <property type="project" value="InterPro"/>
</dbReference>
<dbReference type="GO" id="GO:0005524">
    <property type="term" value="F:ATP binding"/>
    <property type="evidence" value="ECO:0007669"/>
    <property type="project" value="UniProtKB-KW"/>
</dbReference>
<dbReference type="GO" id="GO:0050567">
    <property type="term" value="F:glutaminyl-tRNA synthase (glutamine-hydrolyzing) activity"/>
    <property type="evidence" value="ECO:0007669"/>
    <property type="project" value="UniProtKB-UniRule"/>
</dbReference>
<dbReference type="GO" id="GO:0006412">
    <property type="term" value="P:translation"/>
    <property type="evidence" value="ECO:0007669"/>
    <property type="project" value="UniProtKB-UniRule"/>
</dbReference>
<dbReference type="Gene3D" id="3.90.1300.10">
    <property type="entry name" value="Amidase signature (AS) domain"/>
    <property type="match status" value="1"/>
</dbReference>
<dbReference type="HAMAP" id="MF_00120">
    <property type="entry name" value="GatA"/>
    <property type="match status" value="1"/>
</dbReference>
<dbReference type="InterPro" id="IPR000120">
    <property type="entry name" value="Amidase"/>
</dbReference>
<dbReference type="InterPro" id="IPR020556">
    <property type="entry name" value="Amidase_CS"/>
</dbReference>
<dbReference type="InterPro" id="IPR023631">
    <property type="entry name" value="Amidase_dom"/>
</dbReference>
<dbReference type="InterPro" id="IPR036928">
    <property type="entry name" value="AS_sf"/>
</dbReference>
<dbReference type="InterPro" id="IPR004412">
    <property type="entry name" value="GatA"/>
</dbReference>
<dbReference type="NCBIfam" id="TIGR00132">
    <property type="entry name" value="gatA"/>
    <property type="match status" value="1"/>
</dbReference>
<dbReference type="PANTHER" id="PTHR11895:SF151">
    <property type="entry name" value="GLUTAMYL-TRNA(GLN) AMIDOTRANSFERASE SUBUNIT A"/>
    <property type="match status" value="1"/>
</dbReference>
<dbReference type="PANTHER" id="PTHR11895">
    <property type="entry name" value="TRANSAMIDASE"/>
    <property type="match status" value="1"/>
</dbReference>
<dbReference type="Pfam" id="PF01425">
    <property type="entry name" value="Amidase"/>
    <property type="match status" value="1"/>
</dbReference>
<dbReference type="SUPFAM" id="SSF75304">
    <property type="entry name" value="Amidase signature (AS) enzymes"/>
    <property type="match status" value="1"/>
</dbReference>
<dbReference type="PROSITE" id="PS00571">
    <property type="entry name" value="AMIDASES"/>
    <property type="match status" value="1"/>
</dbReference>